<reference key="1">
    <citation type="submission" date="2004-12" db="EMBL/GenBank/DDBJ databases">
        <authorList>
            <consortium name="NIH - Zebrafish Gene Collection (ZGC) project"/>
        </authorList>
    </citation>
    <scope>NUCLEOTIDE SEQUENCE [LARGE SCALE MRNA]</scope>
    <source>
        <tissue>Ovary</tissue>
    </source>
</reference>
<comment type="function">
    <text evidence="1">Functions as an RNA ligase, in vitro. The ligation reaction entails three nucleotidyl transfer steps. In the first step, the RNA ligase reacts with ATP in the absence of nucleic acid to form a covalent ligase-AMP intermediate and release pyrophosphate. In step 2, the ligase-AMP binds to the nucleic acid and transfers the adenylate to the 5'-PO4 terminus to form an adenylylated intermediate. In step 3, the RNA ligase directs the attack of the 3'-OH on the 5'-phosphoanhydride linkage, resulting in a repaired 3'-5' phosphodiester and release of AMP. Exhibits selectivity for single-stranded RNA substrates and may not have nick-sealing activity on double-stranded DNA-RNA hybrids. May play a role in maintaining RNA integrity under stress conditions, for example in response to reactive oxygen species (ROS).</text>
</comment>
<comment type="catalytic activity">
    <molecule>RNA ligase 1</molecule>
    <reaction evidence="1">
        <text>ATP + (ribonucleotide)n-3'-hydroxyl + 5'-phospho-(ribonucleotide)m = (ribonucleotide)n+m + AMP + diphosphate.</text>
        <dbReference type="EC" id="6.5.1.3"/>
    </reaction>
</comment>
<comment type="cofactor">
    <cofactor evidence="1">
        <name>Mg(2+)</name>
        <dbReference type="ChEBI" id="CHEBI:18420"/>
    </cofactor>
    <cofactor evidence="1">
        <name>Mn(2+)</name>
        <dbReference type="ChEBI" id="CHEBI:29035"/>
    </cofactor>
</comment>
<comment type="PTM">
    <text evidence="1">AMPylates itself (auto-AMPylation).</text>
</comment>
<name>RLIG1_DANRE</name>
<feature type="chain" id="PRO_0000305276" description="RNA ligase 1">
    <location>
        <begin position="1"/>
        <end position="325"/>
    </location>
</feature>
<keyword id="KW-0067">ATP-binding</keyword>
<keyword id="KW-0436">Ligase</keyword>
<keyword id="KW-0547">Nucleotide-binding</keyword>
<keyword id="KW-1185">Reference proteome</keyword>
<keyword id="KW-0692">RNA repair</keyword>
<organism>
    <name type="scientific">Danio rerio</name>
    <name type="common">Zebrafish</name>
    <name type="synonym">Brachydanio rerio</name>
    <dbReference type="NCBI Taxonomy" id="7955"/>
    <lineage>
        <taxon>Eukaryota</taxon>
        <taxon>Metazoa</taxon>
        <taxon>Chordata</taxon>
        <taxon>Craniata</taxon>
        <taxon>Vertebrata</taxon>
        <taxon>Euteleostomi</taxon>
        <taxon>Actinopterygii</taxon>
        <taxon>Neopterygii</taxon>
        <taxon>Teleostei</taxon>
        <taxon>Ostariophysi</taxon>
        <taxon>Cypriniformes</taxon>
        <taxon>Danionidae</taxon>
        <taxon>Danioninae</taxon>
        <taxon>Danio</taxon>
    </lineage>
</organism>
<evidence type="ECO:0000250" key="1">
    <source>
        <dbReference type="UniProtKB" id="Q8N999"/>
    </source>
</evidence>
<protein>
    <recommendedName>
        <fullName>RNA ligase 1</fullName>
        <ecNumber evidence="1">6.5.1.3</ecNumber>
    </recommendedName>
    <alternativeName>
        <fullName>RNA ligase</fullName>
        <shortName>Rnl</shortName>
    </alternativeName>
</protein>
<dbReference type="EC" id="6.5.1.3" evidence="1"/>
<dbReference type="EMBL" id="BC086822">
    <property type="protein sequence ID" value="AAH86822.1"/>
    <property type="molecule type" value="mRNA"/>
</dbReference>
<dbReference type="EMBL" id="BC152148">
    <property type="protein sequence ID" value="AAI52149.1"/>
    <property type="molecule type" value="mRNA"/>
</dbReference>
<dbReference type="RefSeq" id="NP_001008606.1">
    <property type="nucleotide sequence ID" value="NM_001008606.1"/>
</dbReference>
<dbReference type="SMR" id="Q5PR55"/>
<dbReference type="FunCoup" id="Q5PR55">
    <property type="interactions" value="990"/>
</dbReference>
<dbReference type="PaxDb" id="7955-ENSDARP00000067304"/>
<dbReference type="Ensembl" id="ENSDART00000067305">
    <property type="protein sequence ID" value="ENSDARP00000067304"/>
    <property type="gene ID" value="ENSDARG00000045785"/>
</dbReference>
<dbReference type="GeneID" id="494063"/>
<dbReference type="KEGG" id="dre:494063"/>
<dbReference type="AGR" id="ZFIN:ZDB-GENE-041212-30"/>
<dbReference type="CTD" id="91298"/>
<dbReference type="ZFIN" id="ZDB-GENE-041212-30">
    <property type="gene designation" value="rlig1"/>
</dbReference>
<dbReference type="eggNOG" id="ENOG502QWBV">
    <property type="taxonomic scope" value="Eukaryota"/>
</dbReference>
<dbReference type="InParanoid" id="Q5PR55"/>
<dbReference type="OMA" id="KQFMYSA"/>
<dbReference type="OrthoDB" id="6021187at2759"/>
<dbReference type="PhylomeDB" id="Q5PR55"/>
<dbReference type="TreeFam" id="TF328501"/>
<dbReference type="PRO" id="PR:Q5PR55"/>
<dbReference type="Proteomes" id="UP000000437">
    <property type="component" value="Chromosome 25"/>
</dbReference>
<dbReference type="Bgee" id="ENSDARG00000045785">
    <property type="expression patterns" value="Expressed in testis and 24 other cell types or tissues"/>
</dbReference>
<dbReference type="GO" id="GO:0005524">
    <property type="term" value="F:ATP binding"/>
    <property type="evidence" value="ECO:0007669"/>
    <property type="project" value="UniProtKB-KW"/>
</dbReference>
<dbReference type="GO" id="GO:0003972">
    <property type="term" value="F:RNA ligase (ATP) activity"/>
    <property type="evidence" value="ECO:0007669"/>
    <property type="project" value="InterPro"/>
</dbReference>
<dbReference type="GO" id="GO:0000302">
    <property type="term" value="P:response to reactive oxygen species"/>
    <property type="evidence" value="ECO:0007669"/>
    <property type="project" value="InterPro"/>
</dbReference>
<dbReference type="GO" id="GO:0042245">
    <property type="term" value="P:RNA repair"/>
    <property type="evidence" value="ECO:0007669"/>
    <property type="project" value="UniProtKB-KW"/>
</dbReference>
<dbReference type="InterPro" id="IPR041211">
    <property type="entry name" value="RLIG1"/>
</dbReference>
<dbReference type="PANTHER" id="PTHR31219">
    <property type="entry name" value="CHROMOSOME 28 C12ORF29 HOMOLOG"/>
    <property type="match status" value="1"/>
</dbReference>
<dbReference type="PANTHER" id="PTHR31219:SF2">
    <property type="entry name" value="RNA LIGASE 1"/>
    <property type="match status" value="1"/>
</dbReference>
<dbReference type="Pfam" id="PF17720">
    <property type="entry name" value="RLIG1"/>
    <property type="match status" value="1"/>
</dbReference>
<gene>
    <name type="ORF">zgc:103499</name>
</gene>
<proteinExistence type="evidence at transcript level"/>
<sequence length="325" mass="36933">MRRLGSVQQKIPCVFLTEVRDEPSRKRDCQQFQVVATENVSPAALASDVHCAAATEKVDGTCCYVTTFNGEPYLWARLDRKPTKQADKRFKKYQYSQKTCKGFVWNVNEDFREVPEFWMAAHRVQHENGHPVPDEHGHIPGWVPVDHTNKQYCWHSSVVNYGTGVALVLKTHGEDEGQLEIVSVPLADLMEQTLELIGTNVNGNPYGLGSKKHPVHVLVPHGVLRIRNPPAVEFQQICSWFQECQEGRVEGIVWHCDDGMLIKIHRHHLGLKWPVADTFLNTRPVVVHVDESDADPCASEKDLFKSFSSVNRQTFSSVRDIQFEP</sequence>
<accession>Q5PR55</accession>